<evidence type="ECO:0000250" key="1"/>
<evidence type="ECO:0000256" key="2">
    <source>
        <dbReference type="SAM" id="MobiDB-lite"/>
    </source>
</evidence>
<evidence type="ECO:0000305" key="3"/>
<reference key="1">
    <citation type="journal article" date="2015" name="Genome Announc.">
        <title>Draft genome sequence of the cellulolytic fungus Chaetomium globosum.</title>
        <authorList>
            <person name="Cuomo C.A."/>
            <person name="Untereiner W.A."/>
            <person name="Ma L.-J."/>
            <person name="Grabherr M."/>
            <person name="Birren B.W."/>
        </authorList>
    </citation>
    <scope>NUCLEOTIDE SEQUENCE [LARGE SCALE GENOMIC DNA]</scope>
    <source>
        <strain>ATCC 6205 / CBS 148.51 / DSM 1962 / NBRC 6347 / NRRL 1970</strain>
    </source>
</reference>
<keyword id="KW-0010">Activator</keyword>
<keyword id="KW-0195">Cyclin</keyword>
<keyword id="KW-0539">Nucleus</keyword>
<keyword id="KW-1185">Reference proteome</keyword>
<keyword id="KW-0678">Repressor</keyword>
<keyword id="KW-0804">Transcription</keyword>
<keyword id="KW-0805">Transcription regulation</keyword>
<comment type="function">
    <text evidence="1">Component of the SRB8-11 complex. The SRB8-11 complex is a regulatory module of the Mediator complex which is itself involved in regulation of basal and activated RNA polymerase II-dependent transcription. The SRB8-11 complex may be involved in the transcriptional repression of a subset of genes regulated by Mediator. It may inhibit the association of the Mediator complex with RNA polymerase II to form the holoenzyme complex. The SRB8-11 complex phosphorylates the C-terminal domain (CTD) of the largest subunit of RNA polymerase II (By similarity).</text>
</comment>
<comment type="subunit">
    <text evidence="1">Component of the SRB8-11 complex, a regulatory module of the Mediator complex.</text>
</comment>
<comment type="subcellular location">
    <subcellularLocation>
        <location evidence="3">Nucleus</location>
    </subcellularLocation>
</comment>
<comment type="similarity">
    <text evidence="3">Belongs to the cyclin family. Cyclin C subfamily.</text>
</comment>
<comment type="sequence caution" evidence="3">
    <conflict type="erroneous gene model prediction">
        <sequence resource="EMBL-CDS" id="EAQ86750"/>
    </conflict>
</comment>
<proteinExistence type="inferred from homology"/>
<organism>
    <name type="scientific">Chaetomium globosum (strain ATCC 6205 / CBS 148.51 / DSM 1962 / NBRC 6347 / NRRL 1970)</name>
    <name type="common">Soil fungus</name>
    <dbReference type="NCBI Taxonomy" id="306901"/>
    <lineage>
        <taxon>Eukaryota</taxon>
        <taxon>Fungi</taxon>
        <taxon>Dikarya</taxon>
        <taxon>Ascomycota</taxon>
        <taxon>Pezizomycotina</taxon>
        <taxon>Sordariomycetes</taxon>
        <taxon>Sordariomycetidae</taxon>
        <taxon>Sordariales</taxon>
        <taxon>Chaetomiaceae</taxon>
        <taxon>Chaetomium</taxon>
    </lineage>
</organism>
<name>SSN8_CHAGB</name>
<protein>
    <recommendedName>
        <fullName>RNA polymerase II holoenzyme cyclin-like subunit</fullName>
    </recommendedName>
</protein>
<sequence length="364" mass="39849">MAANYWESTQRKHWQFTKQDLAAIRQRLDDEDPGLVQMFPLPQLRHLNIYFNQQINRLSKRIGLRQQVMATAQVYLKRFYTRIAIRQTNPYLVLTTVLYLACKMEECPQHIRMMTQEARSLWPSDLHGHDPARVGECEFSLISEMHSNLIVHQPYRSLLGVQDEFGLTQDEMSLAWTVINDHYMTDLPLLHPPHVVALTAVLLALVLRPSANTPAAGGAGGNAGAAAAAAAAGAGGVAMAATALAQAQAQVQARAAAIAAAGAGGGTPGFGSQGSQQQAGFSQGNSQGSLQGDSAAAEPKKVTDPRLAKVQRFAAWLADSNIDIEAMVDCTQELISFYECHEQYNDKHTKEQISRFIKARNLDK</sequence>
<gene>
    <name type="primary">SSN8</name>
    <name type="ORF">CHGG_08003</name>
</gene>
<feature type="chain" id="PRO_0000314272" description="RNA polymerase II holoenzyme cyclin-like subunit">
    <location>
        <begin position="1"/>
        <end position="364"/>
    </location>
</feature>
<feature type="domain" description="Cyclin N-terminal">
    <location>
        <begin position="53"/>
        <end position="143"/>
    </location>
</feature>
<feature type="region of interest" description="Disordered" evidence="2">
    <location>
        <begin position="268"/>
        <end position="303"/>
    </location>
</feature>
<feature type="compositionally biased region" description="Low complexity" evidence="2">
    <location>
        <begin position="273"/>
        <end position="289"/>
    </location>
</feature>
<accession>Q2GVK1</accession>
<dbReference type="EMBL" id="CH408033">
    <property type="protein sequence ID" value="EAQ86750.1"/>
    <property type="status" value="ALT_SEQ"/>
    <property type="molecule type" value="Genomic_DNA"/>
</dbReference>
<dbReference type="RefSeq" id="XP_001225659.1">
    <property type="nucleotide sequence ID" value="XM_001225658.1"/>
</dbReference>
<dbReference type="SMR" id="Q2GVK1"/>
<dbReference type="FunCoup" id="Q2GVK1">
    <property type="interactions" value="800"/>
</dbReference>
<dbReference type="STRING" id="306901.Q2GVK1"/>
<dbReference type="GeneID" id="4393358"/>
<dbReference type="VEuPathDB" id="FungiDB:CHGG_08003"/>
<dbReference type="eggNOG" id="KOG0794">
    <property type="taxonomic scope" value="Eukaryota"/>
</dbReference>
<dbReference type="HOGENOM" id="CLU_034754_2_0_1"/>
<dbReference type="InParanoid" id="Q2GVK1"/>
<dbReference type="OrthoDB" id="10266018at2759"/>
<dbReference type="Proteomes" id="UP000001056">
    <property type="component" value="Unassembled WGS sequence"/>
</dbReference>
<dbReference type="GO" id="GO:0005634">
    <property type="term" value="C:nucleus"/>
    <property type="evidence" value="ECO:0007669"/>
    <property type="project" value="UniProtKB-SubCell"/>
</dbReference>
<dbReference type="GO" id="GO:0016538">
    <property type="term" value="F:cyclin-dependent protein serine/threonine kinase regulator activity"/>
    <property type="evidence" value="ECO:0007669"/>
    <property type="project" value="InterPro"/>
</dbReference>
<dbReference type="GO" id="GO:0006357">
    <property type="term" value="P:regulation of transcription by RNA polymerase II"/>
    <property type="evidence" value="ECO:0007669"/>
    <property type="project" value="InterPro"/>
</dbReference>
<dbReference type="CDD" id="cd20513">
    <property type="entry name" value="CYCLIN_CCNC_rpt1"/>
    <property type="match status" value="1"/>
</dbReference>
<dbReference type="Gene3D" id="1.10.472.10">
    <property type="entry name" value="Cyclin-like"/>
    <property type="match status" value="2"/>
</dbReference>
<dbReference type="InterPro" id="IPR013763">
    <property type="entry name" value="Cyclin-like_dom"/>
</dbReference>
<dbReference type="InterPro" id="IPR036915">
    <property type="entry name" value="Cyclin-like_sf"/>
</dbReference>
<dbReference type="InterPro" id="IPR043198">
    <property type="entry name" value="Cyclin/Ssn8"/>
</dbReference>
<dbReference type="InterPro" id="IPR006671">
    <property type="entry name" value="Cyclin_N"/>
</dbReference>
<dbReference type="PANTHER" id="PTHR10026">
    <property type="entry name" value="CYCLIN"/>
    <property type="match status" value="1"/>
</dbReference>
<dbReference type="Pfam" id="PF00134">
    <property type="entry name" value="Cyclin_N"/>
    <property type="match status" value="1"/>
</dbReference>
<dbReference type="PIRSF" id="PIRSF028758">
    <property type="entry name" value="Cyclin, C/H/G types"/>
    <property type="match status" value="1"/>
</dbReference>
<dbReference type="SMART" id="SM00385">
    <property type="entry name" value="CYCLIN"/>
    <property type="match status" value="1"/>
</dbReference>
<dbReference type="SUPFAM" id="SSF47954">
    <property type="entry name" value="Cyclin-like"/>
    <property type="match status" value="2"/>
</dbReference>